<feature type="chain" id="PRO_1000120189" description="Large ribosomal subunit protein bL32">
    <location>
        <begin position="1"/>
        <end position="60"/>
    </location>
</feature>
<feature type="region of interest" description="Disordered" evidence="2">
    <location>
        <begin position="1"/>
        <end position="23"/>
    </location>
</feature>
<evidence type="ECO:0000255" key="1">
    <source>
        <dbReference type="HAMAP-Rule" id="MF_00340"/>
    </source>
</evidence>
<evidence type="ECO:0000256" key="2">
    <source>
        <dbReference type="SAM" id="MobiDB-lite"/>
    </source>
</evidence>
<evidence type="ECO:0000305" key="3"/>
<name>RL32_WOLPP</name>
<keyword id="KW-0687">Ribonucleoprotein</keyword>
<keyword id="KW-0689">Ribosomal protein</keyword>
<gene>
    <name evidence="1" type="primary">rpmF</name>
    <name type="ordered locus">WP1027</name>
</gene>
<sequence length="60" mass="6914">MAVPKRKKSKSRRNMHRSHHAIKPKNIVVCATTGEFMLPHNIAVDNSYKGKRVFIKQKAE</sequence>
<accession>B3CML3</accession>
<comment type="similarity">
    <text evidence="1">Belongs to the bacterial ribosomal protein bL32 family.</text>
</comment>
<proteinExistence type="inferred from homology"/>
<organism>
    <name type="scientific">Wolbachia pipientis subsp. Culex pipiens (strain wPip)</name>
    <dbReference type="NCBI Taxonomy" id="570417"/>
    <lineage>
        <taxon>Bacteria</taxon>
        <taxon>Pseudomonadati</taxon>
        <taxon>Pseudomonadota</taxon>
        <taxon>Alphaproteobacteria</taxon>
        <taxon>Rickettsiales</taxon>
        <taxon>Anaplasmataceae</taxon>
        <taxon>Wolbachieae</taxon>
        <taxon>Wolbachia</taxon>
    </lineage>
</organism>
<dbReference type="EMBL" id="AM999887">
    <property type="protein sequence ID" value="CAQ55135.1"/>
    <property type="molecule type" value="Genomic_DNA"/>
</dbReference>
<dbReference type="RefSeq" id="WP_006014434.1">
    <property type="nucleotide sequence ID" value="NC_010981.1"/>
</dbReference>
<dbReference type="SMR" id="B3CML3"/>
<dbReference type="KEGG" id="wpi:WP1027"/>
<dbReference type="eggNOG" id="COG0333">
    <property type="taxonomic scope" value="Bacteria"/>
</dbReference>
<dbReference type="HOGENOM" id="CLU_129084_2_0_5"/>
<dbReference type="Proteomes" id="UP000008814">
    <property type="component" value="Chromosome"/>
</dbReference>
<dbReference type="GO" id="GO:0015934">
    <property type="term" value="C:large ribosomal subunit"/>
    <property type="evidence" value="ECO:0007669"/>
    <property type="project" value="InterPro"/>
</dbReference>
<dbReference type="GO" id="GO:0003735">
    <property type="term" value="F:structural constituent of ribosome"/>
    <property type="evidence" value="ECO:0007669"/>
    <property type="project" value="InterPro"/>
</dbReference>
<dbReference type="GO" id="GO:0006412">
    <property type="term" value="P:translation"/>
    <property type="evidence" value="ECO:0007669"/>
    <property type="project" value="UniProtKB-UniRule"/>
</dbReference>
<dbReference type="Gene3D" id="1.20.5.640">
    <property type="entry name" value="Single helix bin"/>
    <property type="match status" value="1"/>
</dbReference>
<dbReference type="HAMAP" id="MF_00340">
    <property type="entry name" value="Ribosomal_bL32"/>
    <property type="match status" value="1"/>
</dbReference>
<dbReference type="InterPro" id="IPR002677">
    <property type="entry name" value="Ribosomal_bL32"/>
</dbReference>
<dbReference type="InterPro" id="IPR044957">
    <property type="entry name" value="Ribosomal_bL32_bact"/>
</dbReference>
<dbReference type="InterPro" id="IPR011332">
    <property type="entry name" value="Ribosomal_zn-bd"/>
</dbReference>
<dbReference type="NCBIfam" id="TIGR01031">
    <property type="entry name" value="rpmF_bact"/>
    <property type="match status" value="1"/>
</dbReference>
<dbReference type="PANTHER" id="PTHR35534">
    <property type="entry name" value="50S RIBOSOMAL PROTEIN L32"/>
    <property type="match status" value="1"/>
</dbReference>
<dbReference type="PANTHER" id="PTHR35534:SF1">
    <property type="entry name" value="LARGE RIBOSOMAL SUBUNIT PROTEIN BL32"/>
    <property type="match status" value="1"/>
</dbReference>
<dbReference type="Pfam" id="PF01783">
    <property type="entry name" value="Ribosomal_L32p"/>
    <property type="match status" value="1"/>
</dbReference>
<dbReference type="SUPFAM" id="SSF57829">
    <property type="entry name" value="Zn-binding ribosomal proteins"/>
    <property type="match status" value="1"/>
</dbReference>
<reference key="1">
    <citation type="journal article" date="2008" name="Mol. Biol. Evol.">
        <title>Genome evolution of Wolbachia strain wPip from the Culex pipiens group.</title>
        <authorList>
            <person name="Klasson L."/>
            <person name="Walker T."/>
            <person name="Sebaihia M."/>
            <person name="Sanders M.J."/>
            <person name="Quail M.A."/>
            <person name="Lord A."/>
            <person name="Sanders S."/>
            <person name="Earl J."/>
            <person name="O'Neill S.L."/>
            <person name="Thomson N."/>
            <person name="Sinkins S.P."/>
            <person name="Parkhill J."/>
        </authorList>
    </citation>
    <scope>NUCLEOTIDE SEQUENCE [LARGE SCALE GENOMIC DNA]</scope>
    <source>
        <strain>wPip</strain>
    </source>
</reference>
<protein>
    <recommendedName>
        <fullName evidence="1">Large ribosomal subunit protein bL32</fullName>
    </recommendedName>
    <alternativeName>
        <fullName evidence="3">50S ribosomal protein L32</fullName>
    </alternativeName>
</protein>